<proteinExistence type="inferred from homology"/>
<keyword id="KW-0067">ATP-binding</keyword>
<keyword id="KW-0143">Chaperone</keyword>
<keyword id="KW-0547">Nucleotide-binding</keyword>
<keyword id="KW-0597">Phosphoprotein</keyword>
<keyword id="KW-0346">Stress response</keyword>
<gene>
    <name type="primary">dnaK</name>
</gene>
<accession>Q9LCQ5</accession>
<feature type="chain" id="PRO_0000078429" description="Chaperone protein DnaK">
    <location>
        <begin position="1"/>
        <end position="610"/>
    </location>
</feature>
<feature type="region of interest" description="Disordered" evidence="2">
    <location>
        <begin position="581"/>
        <end position="610"/>
    </location>
</feature>
<feature type="compositionally biased region" description="Acidic residues" evidence="2">
    <location>
        <begin position="599"/>
        <end position="610"/>
    </location>
</feature>
<feature type="modified residue" description="Phosphothreonine; by autocatalysis" evidence="1">
    <location>
        <position position="173"/>
    </location>
</feature>
<protein>
    <recommendedName>
        <fullName>Chaperone protein DnaK</fullName>
    </recommendedName>
    <alternativeName>
        <fullName>HSP70</fullName>
    </alternativeName>
    <alternativeName>
        <fullName>Heat shock 70 kDa protein</fullName>
    </alternativeName>
    <alternativeName>
        <fullName>Heat shock protein 70</fullName>
    </alternativeName>
</protein>
<organism>
    <name type="scientific">Brevibacillus choshinensis</name>
    <dbReference type="NCBI Taxonomy" id="54911"/>
    <lineage>
        <taxon>Bacteria</taxon>
        <taxon>Bacillati</taxon>
        <taxon>Bacillota</taxon>
        <taxon>Bacilli</taxon>
        <taxon>Bacillales</taxon>
        <taxon>Paenibacillaceae</taxon>
        <taxon>Brevibacillus</taxon>
    </lineage>
</organism>
<dbReference type="EMBL" id="AB009842">
    <property type="protein sequence ID" value="BAA90473.1"/>
    <property type="molecule type" value="Genomic_DNA"/>
</dbReference>
<dbReference type="RefSeq" id="WP_203356536.1">
    <property type="nucleotide sequence ID" value="NZ_CP069127.1"/>
</dbReference>
<dbReference type="SMR" id="Q9LCQ5"/>
<dbReference type="STRING" id="54911.AN963_03935"/>
<dbReference type="GO" id="GO:0005524">
    <property type="term" value="F:ATP binding"/>
    <property type="evidence" value="ECO:0007669"/>
    <property type="project" value="UniProtKB-UniRule"/>
</dbReference>
<dbReference type="GO" id="GO:0140662">
    <property type="term" value="F:ATP-dependent protein folding chaperone"/>
    <property type="evidence" value="ECO:0007669"/>
    <property type="project" value="InterPro"/>
</dbReference>
<dbReference type="GO" id="GO:0051082">
    <property type="term" value="F:unfolded protein binding"/>
    <property type="evidence" value="ECO:0007669"/>
    <property type="project" value="InterPro"/>
</dbReference>
<dbReference type="CDD" id="cd10234">
    <property type="entry name" value="ASKHA_NBD_HSP70_DnaK-like"/>
    <property type="match status" value="1"/>
</dbReference>
<dbReference type="FunFam" id="2.60.34.10:FF:000014">
    <property type="entry name" value="Chaperone protein DnaK HSP70"/>
    <property type="match status" value="1"/>
</dbReference>
<dbReference type="FunFam" id="1.20.1270.10:FF:000001">
    <property type="entry name" value="Molecular chaperone DnaK"/>
    <property type="match status" value="1"/>
</dbReference>
<dbReference type="FunFam" id="3.30.420.40:FF:000071">
    <property type="entry name" value="Molecular chaperone DnaK"/>
    <property type="match status" value="1"/>
</dbReference>
<dbReference type="FunFam" id="3.90.640.10:FF:000003">
    <property type="entry name" value="Molecular chaperone DnaK"/>
    <property type="match status" value="1"/>
</dbReference>
<dbReference type="Gene3D" id="1.20.1270.10">
    <property type="match status" value="1"/>
</dbReference>
<dbReference type="Gene3D" id="3.30.30.30">
    <property type="match status" value="1"/>
</dbReference>
<dbReference type="Gene3D" id="3.30.420.40">
    <property type="match status" value="3"/>
</dbReference>
<dbReference type="Gene3D" id="3.90.640.10">
    <property type="entry name" value="Actin, Chain A, domain 4"/>
    <property type="match status" value="1"/>
</dbReference>
<dbReference type="Gene3D" id="2.60.34.10">
    <property type="entry name" value="Substrate Binding Domain Of DNAk, Chain A, domain 1"/>
    <property type="match status" value="1"/>
</dbReference>
<dbReference type="HAMAP" id="MF_00332">
    <property type="entry name" value="DnaK"/>
    <property type="match status" value="1"/>
</dbReference>
<dbReference type="InterPro" id="IPR043129">
    <property type="entry name" value="ATPase_NBD"/>
</dbReference>
<dbReference type="InterPro" id="IPR012725">
    <property type="entry name" value="Chaperone_DnaK"/>
</dbReference>
<dbReference type="InterPro" id="IPR018181">
    <property type="entry name" value="Heat_shock_70_CS"/>
</dbReference>
<dbReference type="InterPro" id="IPR029048">
    <property type="entry name" value="HSP70_C_sf"/>
</dbReference>
<dbReference type="InterPro" id="IPR029047">
    <property type="entry name" value="HSP70_peptide-bd_sf"/>
</dbReference>
<dbReference type="InterPro" id="IPR013126">
    <property type="entry name" value="Hsp_70_fam"/>
</dbReference>
<dbReference type="NCBIfam" id="NF001413">
    <property type="entry name" value="PRK00290.1"/>
    <property type="match status" value="1"/>
</dbReference>
<dbReference type="NCBIfam" id="TIGR02350">
    <property type="entry name" value="prok_dnaK"/>
    <property type="match status" value="1"/>
</dbReference>
<dbReference type="PANTHER" id="PTHR19375">
    <property type="entry name" value="HEAT SHOCK PROTEIN 70KDA"/>
    <property type="match status" value="1"/>
</dbReference>
<dbReference type="Pfam" id="PF00012">
    <property type="entry name" value="HSP70"/>
    <property type="match status" value="1"/>
</dbReference>
<dbReference type="PRINTS" id="PR00301">
    <property type="entry name" value="HEATSHOCK70"/>
</dbReference>
<dbReference type="SUPFAM" id="SSF53067">
    <property type="entry name" value="Actin-like ATPase domain"/>
    <property type="match status" value="2"/>
</dbReference>
<dbReference type="SUPFAM" id="SSF100934">
    <property type="entry name" value="Heat shock protein 70kD (HSP70), C-terminal subdomain"/>
    <property type="match status" value="1"/>
</dbReference>
<dbReference type="SUPFAM" id="SSF100920">
    <property type="entry name" value="Heat shock protein 70kD (HSP70), peptide-binding domain"/>
    <property type="match status" value="1"/>
</dbReference>
<dbReference type="PROSITE" id="PS00297">
    <property type="entry name" value="HSP70_1"/>
    <property type="match status" value="1"/>
</dbReference>
<dbReference type="PROSITE" id="PS00329">
    <property type="entry name" value="HSP70_2"/>
    <property type="match status" value="1"/>
</dbReference>
<dbReference type="PROSITE" id="PS01036">
    <property type="entry name" value="HSP70_3"/>
    <property type="match status" value="1"/>
</dbReference>
<name>DNAK_BRECH</name>
<reference key="1">
    <citation type="journal article" date="1998" name="Biochim. Biophys. Acta">
        <title>Molecular cloning of the dnaK locus, and purification and characterization of a DnaK protein from Bacillus brevis HPD31.</title>
        <authorList>
            <person name="Tokunaga H."/>
            <person name="Yamakawa M."/>
            <person name="Mizukami M."/>
            <person name="Takagi H."/>
            <person name="Tokunaga M."/>
        </authorList>
    </citation>
    <scope>NUCLEOTIDE SEQUENCE [GENOMIC DNA]</scope>
    <source>
        <strain>HPD31</strain>
    </source>
</reference>
<evidence type="ECO:0000250" key="1"/>
<evidence type="ECO:0000256" key="2">
    <source>
        <dbReference type="SAM" id="MobiDB-lite"/>
    </source>
</evidence>
<evidence type="ECO:0000305" key="3"/>
<sequence length="610" mass="65482">MSRVIGIDLGTTNSCVAVMEGGEPVVIANPEGNRTTPSVVAFKNGEKIVGEAAKRQAITNPDNTVISIKRHMGTSHKETLEGNEYTPQQISAMILQKLKSDAEAYLGESVTQAVITVPAYFNDSQRQATKDAGKIAGLEVLRIVNEPTAAALAYGMEKSEDQTVLVFDLGGGTFDVSILELSEGFFEVKATSGDNKLGGDDFDQVVMDYLVSEFKKEHGIDLSKDRMAQQRLKDAAEKAKKDLSGVLTTTISLPFITADATGPKHLEMNLTRAKFEELSSNLVERTMGPTRQALNDAGLTPNEIDKVILVGGSTRIPAVQEAIKKFTGKEPHKGVNPDEVVALGAAVQAGVLTGDVKDVVLLDVTPLSLGIETLGGVFTKLIDRNTTIPTSKSQVFSTAADNQPGVEIHVLQGERQMAADNKTLGRFNLNDIPPAPRGVPQIEVSFDIDANGIVNVRAKDLGTGKEQRITITASSGLSDEEIDRMVKEAELNAEADKQRKEQVEIRNEADQLVFTTEKTLKEVEGKVDQAEIDRANAAKDKVKKALEGGSIDEIKSAKDELSEIVQQISVKLYEQAAQAAGAAQGGAEGSAEPKKDNVVDADYEVVDDKK</sequence>
<comment type="function">
    <text evidence="1">Acts as a chaperone.</text>
</comment>
<comment type="induction">
    <text evidence="1">By stress conditions e.g. heat shock (By similarity).</text>
</comment>
<comment type="similarity">
    <text evidence="3">Belongs to the heat shock protein 70 family.</text>
</comment>